<evidence type="ECO:0000255" key="1">
    <source>
        <dbReference type="HAMAP-Rule" id="MF_00482"/>
    </source>
</evidence>
<evidence type="ECO:0007829" key="2">
    <source>
        <dbReference type="PDB" id="2O01"/>
    </source>
</evidence>
<evidence type="ECO:0007829" key="3">
    <source>
        <dbReference type="PDB" id="2WSC"/>
    </source>
</evidence>
<evidence type="ECO:0007829" key="4">
    <source>
        <dbReference type="PDB" id="3LW5"/>
    </source>
</evidence>
<evidence type="ECO:0007829" key="5">
    <source>
        <dbReference type="PDB" id="4XK8"/>
    </source>
</evidence>
<evidence type="ECO:0007829" key="6">
    <source>
        <dbReference type="PDB" id="4Y28"/>
    </source>
</evidence>
<protein>
    <recommendedName>
        <fullName evidence="1">Photosystem I P700 chlorophyll a apoprotein A2</fullName>
        <ecNumber evidence="1">1.97.1.12</ecNumber>
    </recommendedName>
    <alternativeName>
        <fullName evidence="1">PSI-B</fullName>
    </alternativeName>
    <alternativeName>
        <fullName evidence="1">PsaB</fullName>
    </alternativeName>
</protein>
<comment type="function">
    <text evidence="1">PsaA and PsaB bind P700, the primary electron donor of photosystem I (PSI), as well as the electron acceptors A0, A1 and FX. PSI is a plastocyanin-ferredoxin oxidoreductase, converting photonic excitation into a charge separation, which transfers an electron from the donor P700 chlorophyll pair to the spectroscopically characterized acceptors A0, A1, FX, FA and FB in turn. Oxidized P700 is reduced on the lumenal side of the thylakoid membrane by plastocyanin.</text>
</comment>
<comment type="catalytic activity">
    <reaction evidence="1">
        <text>reduced [plastocyanin] + hnu + oxidized [2Fe-2S]-[ferredoxin] = oxidized [plastocyanin] + reduced [2Fe-2S]-[ferredoxin]</text>
        <dbReference type="Rhea" id="RHEA:30407"/>
        <dbReference type="Rhea" id="RHEA-COMP:10000"/>
        <dbReference type="Rhea" id="RHEA-COMP:10001"/>
        <dbReference type="Rhea" id="RHEA-COMP:10039"/>
        <dbReference type="Rhea" id="RHEA-COMP:10040"/>
        <dbReference type="ChEBI" id="CHEBI:29036"/>
        <dbReference type="ChEBI" id="CHEBI:30212"/>
        <dbReference type="ChEBI" id="CHEBI:33737"/>
        <dbReference type="ChEBI" id="CHEBI:33738"/>
        <dbReference type="ChEBI" id="CHEBI:49552"/>
        <dbReference type="EC" id="1.97.1.12"/>
    </reaction>
</comment>
<comment type="cofactor">
    <text evidence="1">P700 is a chlorophyll a/chlorophyll a' dimer, A0 is one or more chlorophyll a, A1 is one or both phylloquinones and FX is a shared 4Fe-4S iron-sulfur center.</text>
</comment>
<comment type="subunit">
    <text evidence="1">The PsaA/B heterodimer binds the P700 chlorophyll special pair and subsequent electron acceptors. PSI consists of a core antenna complex that captures photons, and an electron transfer chain that converts photonic excitation into a charge separation. The eukaryotic PSI reaction center is composed of at least 11 subunits.</text>
</comment>
<comment type="subcellular location">
    <subcellularLocation>
        <location evidence="1">Plastid</location>
        <location evidence="1">Chloroplast thylakoid membrane</location>
        <topology evidence="1">Multi-pass membrane protein</topology>
    </subcellularLocation>
</comment>
<comment type="similarity">
    <text evidence="1">Belongs to the PsaA/PsaB family.</text>
</comment>
<name>PSAB_PEA</name>
<accession>P05311</accession>
<keyword id="KW-0002">3D-structure</keyword>
<keyword id="KW-0004">4Fe-4S</keyword>
<keyword id="KW-0148">Chlorophyll</keyword>
<keyword id="KW-0150">Chloroplast</keyword>
<keyword id="KW-0157">Chromophore</keyword>
<keyword id="KW-0249">Electron transport</keyword>
<keyword id="KW-0408">Iron</keyword>
<keyword id="KW-0411">Iron-sulfur</keyword>
<keyword id="KW-0460">Magnesium</keyword>
<keyword id="KW-0472">Membrane</keyword>
<keyword id="KW-0479">Metal-binding</keyword>
<keyword id="KW-0560">Oxidoreductase</keyword>
<keyword id="KW-0602">Photosynthesis</keyword>
<keyword id="KW-0603">Photosystem I</keyword>
<keyword id="KW-0934">Plastid</keyword>
<keyword id="KW-0793">Thylakoid</keyword>
<keyword id="KW-0812">Transmembrane</keyword>
<keyword id="KW-1133">Transmembrane helix</keyword>
<keyword id="KW-0813">Transport</keyword>
<proteinExistence type="evidence at protein level"/>
<feature type="chain" id="PRO_0000088630" description="Photosystem I P700 chlorophyll a apoprotein A2">
    <location>
        <begin position="1"/>
        <end position="734"/>
    </location>
</feature>
<feature type="transmembrane region" description="Helical; Name=I" evidence="1">
    <location>
        <begin position="46"/>
        <end position="69"/>
    </location>
</feature>
<feature type="transmembrane region" description="Helical; Name=II" evidence="1">
    <location>
        <begin position="135"/>
        <end position="158"/>
    </location>
</feature>
<feature type="transmembrane region" description="Helical; Name=III" evidence="1">
    <location>
        <begin position="175"/>
        <end position="199"/>
    </location>
</feature>
<feature type="transmembrane region" description="Helical; Name=IV" evidence="1">
    <location>
        <begin position="273"/>
        <end position="291"/>
    </location>
</feature>
<feature type="transmembrane region" description="Helical; Name=V" evidence="1">
    <location>
        <begin position="330"/>
        <end position="353"/>
    </location>
</feature>
<feature type="transmembrane region" description="Helical; Name=VI" evidence="1">
    <location>
        <begin position="369"/>
        <end position="395"/>
    </location>
</feature>
<feature type="transmembrane region" description="Helical; Name=VII" evidence="1">
    <location>
        <begin position="417"/>
        <end position="439"/>
    </location>
</feature>
<feature type="transmembrane region" description="Helical; Name=VIII" evidence="1">
    <location>
        <begin position="517"/>
        <end position="535"/>
    </location>
</feature>
<feature type="transmembrane region" description="Helical; Name=IX" evidence="1">
    <location>
        <begin position="575"/>
        <end position="596"/>
    </location>
</feature>
<feature type="transmembrane region" description="Helical; Name=X" evidence="1">
    <location>
        <begin position="643"/>
        <end position="665"/>
    </location>
</feature>
<feature type="transmembrane region" description="Helical; Name=XI" evidence="1">
    <location>
        <begin position="707"/>
        <end position="727"/>
    </location>
</feature>
<feature type="binding site" evidence="1">
    <location>
        <position position="559"/>
    </location>
    <ligand>
        <name>[4Fe-4S] cluster</name>
        <dbReference type="ChEBI" id="CHEBI:49883"/>
        <note>ligand shared between dimeric partners</note>
    </ligand>
</feature>
<feature type="binding site" evidence="1">
    <location>
        <position position="568"/>
    </location>
    <ligand>
        <name>[4Fe-4S] cluster</name>
        <dbReference type="ChEBI" id="CHEBI:49883"/>
        <note>ligand shared between dimeric partners</note>
    </ligand>
</feature>
<feature type="binding site" description="axial binding residue" evidence="1">
    <location>
        <position position="654"/>
    </location>
    <ligand>
        <name>chlorophyll a</name>
        <dbReference type="ChEBI" id="CHEBI:58416"/>
        <label>B1</label>
    </ligand>
    <ligandPart>
        <name>Mg</name>
        <dbReference type="ChEBI" id="CHEBI:25107"/>
    </ligandPart>
</feature>
<feature type="binding site" description="axial binding residue" evidence="1">
    <location>
        <position position="662"/>
    </location>
    <ligand>
        <name>chlorophyll a</name>
        <dbReference type="ChEBI" id="CHEBI:58416"/>
        <label>B3</label>
    </ligand>
    <ligandPart>
        <name>Mg</name>
        <dbReference type="ChEBI" id="CHEBI:25107"/>
    </ligandPart>
</feature>
<feature type="binding site" evidence="1">
    <location>
        <position position="670"/>
    </location>
    <ligand>
        <name>chlorophyll a</name>
        <dbReference type="ChEBI" id="CHEBI:58416"/>
        <label>B3</label>
    </ligand>
</feature>
<feature type="binding site" evidence="1">
    <location>
        <position position="671"/>
    </location>
    <ligand>
        <name>phylloquinone</name>
        <dbReference type="ChEBI" id="CHEBI:18067"/>
        <label>B</label>
    </ligand>
</feature>
<feature type="strand" evidence="5">
    <location>
        <begin position="4"/>
        <end position="6"/>
    </location>
</feature>
<feature type="helix" evidence="5">
    <location>
        <begin position="10"/>
        <end position="13"/>
    </location>
</feature>
<feature type="helix" evidence="5">
    <location>
        <begin position="19"/>
        <end position="26"/>
    </location>
</feature>
<feature type="turn" evidence="5">
    <location>
        <begin position="27"/>
        <end position="29"/>
    </location>
</feature>
<feature type="helix" evidence="5">
    <location>
        <begin position="31"/>
        <end position="33"/>
    </location>
</feature>
<feature type="strand" evidence="2">
    <location>
        <begin position="34"/>
        <end position="36"/>
    </location>
</feature>
<feature type="helix" evidence="5">
    <location>
        <begin position="39"/>
        <end position="71"/>
    </location>
</feature>
<feature type="helix" evidence="5">
    <location>
        <begin position="74"/>
        <end position="79"/>
    </location>
</feature>
<feature type="strand" evidence="5">
    <location>
        <begin position="81"/>
        <end position="84"/>
    </location>
</feature>
<feature type="strand" evidence="5">
    <location>
        <begin position="87"/>
        <end position="90"/>
    </location>
</feature>
<feature type="helix" evidence="5">
    <location>
        <begin position="98"/>
        <end position="103"/>
    </location>
</feature>
<feature type="strand" evidence="3">
    <location>
        <begin position="109"/>
        <end position="111"/>
    </location>
</feature>
<feature type="strand" evidence="5">
    <location>
        <begin position="113"/>
        <end position="115"/>
    </location>
</feature>
<feature type="helix" evidence="5">
    <location>
        <begin position="120"/>
        <end position="127"/>
    </location>
</feature>
<feature type="helix" evidence="5">
    <location>
        <begin position="132"/>
        <end position="157"/>
    </location>
</feature>
<feature type="turn" evidence="5">
    <location>
        <begin position="159"/>
        <end position="161"/>
    </location>
</feature>
<feature type="helix" evidence="5">
    <location>
        <begin position="165"/>
        <end position="168"/>
    </location>
</feature>
<feature type="helix" evidence="5">
    <location>
        <begin position="171"/>
        <end position="180"/>
    </location>
</feature>
<feature type="turn" evidence="5">
    <location>
        <begin position="181"/>
        <end position="183"/>
    </location>
</feature>
<feature type="helix" evidence="5">
    <location>
        <begin position="184"/>
        <end position="196"/>
    </location>
</feature>
<feature type="helix" evidence="5">
    <location>
        <begin position="198"/>
        <end position="202"/>
    </location>
</feature>
<feature type="turn" evidence="5">
    <location>
        <begin position="209"/>
        <end position="214"/>
    </location>
</feature>
<feature type="turn" evidence="5">
    <location>
        <begin position="219"/>
        <end position="222"/>
    </location>
</feature>
<feature type="helix" evidence="5">
    <location>
        <begin position="223"/>
        <end position="227"/>
    </location>
</feature>
<feature type="helix" evidence="5">
    <location>
        <begin position="230"/>
        <end position="234"/>
    </location>
</feature>
<feature type="strand" evidence="2">
    <location>
        <begin position="244"/>
        <end position="249"/>
    </location>
</feature>
<feature type="strand" evidence="6">
    <location>
        <begin position="260"/>
        <end position="262"/>
    </location>
</feature>
<feature type="turn" evidence="5">
    <location>
        <begin position="263"/>
        <end position="266"/>
    </location>
</feature>
<feature type="helix" evidence="5">
    <location>
        <begin position="270"/>
        <end position="287"/>
    </location>
</feature>
<feature type="strand" evidence="4">
    <location>
        <begin position="288"/>
        <end position="291"/>
    </location>
</feature>
<feature type="strand" evidence="5">
    <location>
        <begin position="294"/>
        <end position="296"/>
    </location>
</feature>
<feature type="helix" evidence="5">
    <location>
        <begin position="301"/>
        <end position="307"/>
    </location>
</feature>
<feature type="turn" evidence="5">
    <location>
        <begin position="314"/>
        <end position="321"/>
    </location>
</feature>
<feature type="helix" evidence="5">
    <location>
        <begin position="322"/>
        <end position="327"/>
    </location>
</feature>
<feature type="helix" evidence="5">
    <location>
        <begin position="330"/>
        <end position="354"/>
    </location>
</feature>
<feature type="strand" evidence="3">
    <location>
        <begin position="358"/>
        <end position="360"/>
    </location>
</feature>
<feature type="strand" evidence="3">
    <location>
        <begin position="362"/>
        <end position="364"/>
    </location>
</feature>
<feature type="helix" evidence="5">
    <location>
        <begin position="365"/>
        <end position="396"/>
    </location>
</feature>
<feature type="helix" evidence="5">
    <location>
        <begin position="401"/>
        <end position="403"/>
    </location>
</feature>
<feature type="helix" evidence="5">
    <location>
        <begin position="407"/>
        <end position="413"/>
    </location>
</feature>
<feature type="helix" evidence="5">
    <location>
        <begin position="415"/>
        <end position="445"/>
    </location>
</feature>
<feature type="helix" evidence="5">
    <location>
        <begin position="449"/>
        <end position="451"/>
    </location>
</feature>
<feature type="helix" evidence="5">
    <location>
        <begin position="458"/>
        <end position="466"/>
    </location>
</feature>
<feature type="helix" evidence="5">
    <location>
        <begin position="477"/>
        <end position="479"/>
    </location>
</feature>
<feature type="helix" evidence="5">
    <location>
        <begin position="484"/>
        <end position="488"/>
    </location>
</feature>
<feature type="turn" evidence="5">
    <location>
        <begin position="490"/>
        <end position="493"/>
    </location>
</feature>
<feature type="helix" evidence="5">
    <location>
        <begin position="494"/>
        <end position="501"/>
    </location>
</feature>
<feature type="strand" evidence="6">
    <location>
        <begin position="504"/>
        <end position="506"/>
    </location>
</feature>
<feature type="helix" evidence="5">
    <location>
        <begin position="514"/>
        <end position="539"/>
    </location>
</feature>
<feature type="turn" evidence="6">
    <location>
        <begin position="540"/>
        <end position="542"/>
    </location>
</feature>
<feature type="strand" evidence="3">
    <location>
        <begin position="547"/>
        <end position="549"/>
    </location>
</feature>
<feature type="helix" evidence="5">
    <location>
        <begin position="550"/>
        <end position="552"/>
    </location>
</feature>
<feature type="helix" evidence="6">
    <location>
        <begin position="563"/>
        <end position="565"/>
    </location>
</feature>
<feature type="helix" evidence="5">
    <location>
        <begin position="572"/>
        <end position="603"/>
    </location>
</feature>
<feature type="helix" evidence="5">
    <location>
        <begin position="606"/>
        <end position="612"/>
    </location>
</feature>
<feature type="helix" evidence="5">
    <location>
        <begin position="616"/>
        <end position="622"/>
    </location>
</feature>
<feature type="turn" evidence="5">
    <location>
        <begin position="623"/>
        <end position="625"/>
    </location>
</feature>
<feature type="helix" evidence="5">
    <location>
        <begin position="626"/>
        <end position="628"/>
    </location>
</feature>
<feature type="helix" evidence="5">
    <location>
        <begin position="629"/>
        <end position="632"/>
    </location>
</feature>
<feature type="turn" evidence="3">
    <location>
        <begin position="633"/>
        <end position="635"/>
    </location>
</feature>
<feature type="helix" evidence="2">
    <location>
        <begin position="636"/>
        <end position="638"/>
    </location>
</feature>
<feature type="helix" evidence="5">
    <location>
        <begin position="644"/>
        <end position="665"/>
    </location>
</feature>
<feature type="helix" evidence="5">
    <location>
        <begin position="668"/>
        <end position="683"/>
    </location>
</feature>
<feature type="helix" evidence="5">
    <location>
        <begin position="688"/>
        <end position="690"/>
    </location>
</feature>
<feature type="strand" evidence="5">
    <location>
        <begin position="694"/>
        <end position="696"/>
    </location>
</feature>
<feature type="helix" evidence="5">
    <location>
        <begin position="702"/>
        <end position="730"/>
    </location>
</feature>
<geneLocation type="chloroplast"/>
<reference key="1">
    <citation type="journal article" date="1986" name="Plant Mol. Biol.">
        <title>Sequence of two genes in pea chloroplast DNA coding for 84 and 82 kD polypeptides of the photosystem I complex.</title>
        <authorList>
            <person name="Lehmbeck J."/>
            <person name="Rasmussen O.F."/>
            <person name="Bookjans G.B."/>
            <person name="Jepsen B.R."/>
            <person name="Stummann B.M."/>
            <person name="Henningsen K.W."/>
        </authorList>
        <dbReference type="AGRICOLA" id="IND87003969"/>
    </citation>
    <scope>NUCLEOTIDE SEQUENCE [GENOMIC DNA]</scope>
</reference>
<organism>
    <name type="scientific">Pisum sativum</name>
    <name type="common">Garden pea</name>
    <name type="synonym">Lathyrus oleraceus</name>
    <dbReference type="NCBI Taxonomy" id="3888"/>
    <lineage>
        <taxon>Eukaryota</taxon>
        <taxon>Viridiplantae</taxon>
        <taxon>Streptophyta</taxon>
        <taxon>Embryophyta</taxon>
        <taxon>Tracheophyta</taxon>
        <taxon>Spermatophyta</taxon>
        <taxon>Magnoliopsida</taxon>
        <taxon>eudicotyledons</taxon>
        <taxon>Gunneridae</taxon>
        <taxon>Pentapetalae</taxon>
        <taxon>rosids</taxon>
        <taxon>fabids</taxon>
        <taxon>Fabales</taxon>
        <taxon>Fabaceae</taxon>
        <taxon>Papilionoideae</taxon>
        <taxon>50 kb inversion clade</taxon>
        <taxon>NPAAA clade</taxon>
        <taxon>Hologalegina</taxon>
        <taxon>IRL clade</taxon>
        <taxon>Fabeae</taxon>
        <taxon>Pisum</taxon>
    </lineage>
</organism>
<gene>
    <name evidence="1" type="primary">psaB</name>
    <name type="synonym">psaA2</name>
</gene>
<sequence length="734" mass="82412">MALRIPRFSQGIAQDPTTRRIWFGIATAHDFESHDDITEGRLYQNIFASHFGQLAIIFLWTSGNLFHVAWQGNFEAWVQDPFHVRPIAHAIWDPHFGQPAVEAFTRGGALGPVNNAYSGVYQWWYTIGLRTNEDLYTGAIFLLFLSFISLLAGWLHLQPKWKPSVSWFKNAESRLNHHLSGLFGVSSLAWAGHLVHVAIPGSRGEYVRWNNFLDVLPYPQGLGPLLTGQWNLYAQNPSSSNHLFGTTQGAGTAILTILGGFHPQTQSLWLTDVAHHHLAIAFLFLIGGLMYRTNFGIGHSIKYILEAHIPPGGRLGRGHKGLYDTINNSIHFQLGLALASLGVITSLVAQHMYSLPAYAFIAQDFTTQAALYTHHQYIAGFIMTGAFAHGPIFFIRDYNPEQNADNVLARMLEHKEAIISHLSWASLFLGFHTLGLYVHNDVMLAFGTPEKQILIEPIFAQWIQSAHGKTTYGFDIPLSSTNGPALNAGRNIWLPGWLNAINENSNSLFLTIGPGDFLVHHAIALGLHTTTLILVKGALDARGSKLMPDKKDFGYSFPCDGPGRGGTCDISAWDDFYLAVFWMLNTIGWVTFYWHWKHITLWRGNVSQFNESSTYLMGWLRDYLWLNSSQLINGITPLVCNSLSVWAWMFLFGHLVWATGFMFLISWRGYWQELIETLAWAHERTPLANLIRWRDKPVALSIVQARLVGLVHFSVGYIFTYAAFLIASTSGKFG</sequence>
<dbReference type="EC" id="1.97.1.12" evidence="1"/>
<dbReference type="EMBL" id="X05423">
    <property type="protein sequence ID" value="CAA29004.1"/>
    <property type="molecule type" value="Genomic_DNA"/>
</dbReference>
<dbReference type="PIR" id="S00704">
    <property type="entry name" value="S00704"/>
</dbReference>
<dbReference type="RefSeq" id="YP_003587537.1">
    <property type="nucleotide sequence ID" value="NC_014057.1"/>
</dbReference>
<dbReference type="PDB" id="2O01">
    <property type="method" value="X-ray"/>
    <property type="resolution" value="3.40 A"/>
    <property type="chains" value="B=2-733"/>
</dbReference>
<dbReference type="PDB" id="2WSC">
    <property type="method" value="X-ray"/>
    <property type="resolution" value="3.30 A"/>
    <property type="chains" value="B=1-734"/>
</dbReference>
<dbReference type="PDB" id="2WSE">
    <property type="method" value="X-ray"/>
    <property type="resolution" value="3.49 A"/>
    <property type="chains" value="B=1-734"/>
</dbReference>
<dbReference type="PDB" id="2WSF">
    <property type="method" value="X-ray"/>
    <property type="resolution" value="3.48 A"/>
    <property type="chains" value="B=1-734"/>
</dbReference>
<dbReference type="PDB" id="3LW5">
    <property type="method" value="X-ray"/>
    <property type="resolution" value="3.30 A"/>
    <property type="chains" value="B=2-734"/>
</dbReference>
<dbReference type="PDB" id="4RKU">
    <property type="method" value="X-ray"/>
    <property type="resolution" value="3.00 A"/>
    <property type="chains" value="B=3-733"/>
</dbReference>
<dbReference type="PDB" id="4XK8">
    <property type="method" value="X-ray"/>
    <property type="resolution" value="2.80 A"/>
    <property type="chains" value="B/b=2-734"/>
</dbReference>
<dbReference type="PDB" id="4Y28">
    <property type="method" value="X-ray"/>
    <property type="resolution" value="2.80 A"/>
    <property type="chains" value="B=1-733"/>
</dbReference>
<dbReference type="PDBsum" id="2O01"/>
<dbReference type="PDBsum" id="2WSC"/>
<dbReference type="PDBsum" id="2WSE"/>
<dbReference type="PDBsum" id="2WSF"/>
<dbReference type="PDBsum" id="3LW5"/>
<dbReference type="PDBsum" id="4RKU"/>
<dbReference type="PDBsum" id="4XK8"/>
<dbReference type="PDBsum" id="4Y28"/>
<dbReference type="SMR" id="P05311"/>
<dbReference type="DIP" id="DIP-60282N"/>
<dbReference type="IntAct" id="P05311">
    <property type="interactions" value="2"/>
</dbReference>
<dbReference type="GeneID" id="9073070"/>
<dbReference type="EvolutionaryTrace" id="P05311"/>
<dbReference type="GO" id="GO:0009535">
    <property type="term" value="C:chloroplast thylakoid membrane"/>
    <property type="evidence" value="ECO:0007669"/>
    <property type="project" value="UniProtKB-SubCell"/>
</dbReference>
<dbReference type="GO" id="GO:0009522">
    <property type="term" value="C:photosystem I"/>
    <property type="evidence" value="ECO:0007669"/>
    <property type="project" value="UniProtKB-KW"/>
</dbReference>
<dbReference type="GO" id="GO:0051539">
    <property type="term" value="F:4 iron, 4 sulfur cluster binding"/>
    <property type="evidence" value="ECO:0007669"/>
    <property type="project" value="UniProtKB-KW"/>
</dbReference>
<dbReference type="GO" id="GO:0016168">
    <property type="term" value="F:chlorophyll binding"/>
    <property type="evidence" value="ECO:0007669"/>
    <property type="project" value="UniProtKB-KW"/>
</dbReference>
<dbReference type="GO" id="GO:0009055">
    <property type="term" value="F:electron transfer activity"/>
    <property type="evidence" value="ECO:0007669"/>
    <property type="project" value="UniProtKB-UniRule"/>
</dbReference>
<dbReference type="GO" id="GO:0000287">
    <property type="term" value="F:magnesium ion binding"/>
    <property type="evidence" value="ECO:0007669"/>
    <property type="project" value="UniProtKB-UniRule"/>
</dbReference>
<dbReference type="GO" id="GO:0016491">
    <property type="term" value="F:oxidoreductase activity"/>
    <property type="evidence" value="ECO:0007669"/>
    <property type="project" value="UniProtKB-KW"/>
</dbReference>
<dbReference type="GO" id="GO:0015979">
    <property type="term" value="P:photosynthesis"/>
    <property type="evidence" value="ECO:0007669"/>
    <property type="project" value="UniProtKB-UniRule"/>
</dbReference>
<dbReference type="FunFam" id="1.20.1130.10:FF:000001">
    <property type="entry name" value="Photosystem I P700 chlorophyll a apoprotein A2"/>
    <property type="match status" value="1"/>
</dbReference>
<dbReference type="Gene3D" id="1.20.1130.10">
    <property type="entry name" value="Photosystem I PsaA/PsaB"/>
    <property type="match status" value="1"/>
</dbReference>
<dbReference type="HAMAP" id="MF_00482">
    <property type="entry name" value="PSI_PsaB"/>
    <property type="match status" value="1"/>
</dbReference>
<dbReference type="InterPro" id="IPR001280">
    <property type="entry name" value="PSI_PsaA/B"/>
</dbReference>
<dbReference type="InterPro" id="IPR020586">
    <property type="entry name" value="PSI_PsaA/B_CS"/>
</dbReference>
<dbReference type="InterPro" id="IPR036408">
    <property type="entry name" value="PSI_PsaA/B_sf"/>
</dbReference>
<dbReference type="InterPro" id="IPR006244">
    <property type="entry name" value="PSI_PsaB"/>
</dbReference>
<dbReference type="NCBIfam" id="TIGR01336">
    <property type="entry name" value="psaB"/>
    <property type="match status" value="1"/>
</dbReference>
<dbReference type="PANTHER" id="PTHR30128">
    <property type="entry name" value="OUTER MEMBRANE PROTEIN, OMPA-RELATED"/>
    <property type="match status" value="1"/>
</dbReference>
<dbReference type="PANTHER" id="PTHR30128:SF19">
    <property type="entry name" value="PHOTOSYSTEM I P700 CHLOROPHYLL A APOPROTEIN A1-RELATED"/>
    <property type="match status" value="1"/>
</dbReference>
<dbReference type="Pfam" id="PF00223">
    <property type="entry name" value="PsaA_PsaB"/>
    <property type="match status" value="1"/>
</dbReference>
<dbReference type="PIRSF" id="PIRSF002905">
    <property type="entry name" value="PSI_A"/>
    <property type="match status" value="1"/>
</dbReference>
<dbReference type="PRINTS" id="PR00257">
    <property type="entry name" value="PHOTSYSPSAAB"/>
</dbReference>
<dbReference type="SUPFAM" id="SSF81558">
    <property type="entry name" value="Photosystem I subunits PsaA/PsaB"/>
    <property type="match status" value="1"/>
</dbReference>
<dbReference type="PROSITE" id="PS00419">
    <property type="entry name" value="PHOTOSYSTEM_I_PSAAB"/>
    <property type="match status" value="1"/>
</dbReference>